<gene>
    <name type="primary">irtB</name>
    <name type="ordered locus">Rv1349</name>
    <name type="ORF">MTCY02B10.13</name>
</gene>
<organism>
    <name type="scientific">Mycobacterium tuberculosis (strain ATCC 25618 / H37Rv)</name>
    <dbReference type="NCBI Taxonomy" id="83332"/>
    <lineage>
        <taxon>Bacteria</taxon>
        <taxon>Bacillati</taxon>
        <taxon>Actinomycetota</taxon>
        <taxon>Actinomycetes</taxon>
        <taxon>Mycobacteriales</taxon>
        <taxon>Mycobacteriaceae</taxon>
        <taxon>Mycobacterium</taxon>
        <taxon>Mycobacterium tuberculosis complex</taxon>
    </lineage>
</organism>
<reference key="1">
    <citation type="journal article" date="1998" name="Nature">
        <title>Deciphering the biology of Mycobacterium tuberculosis from the complete genome sequence.</title>
        <authorList>
            <person name="Cole S.T."/>
            <person name="Brosch R."/>
            <person name="Parkhill J."/>
            <person name="Garnier T."/>
            <person name="Churcher C.M."/>
            <person name="Harris D.E."/>
            <person name="Gordon S.V."/>
            <person name="Eiglmeier K."/>
            <person name="Gas S."/>
            <person name="Barry C.E. III"/>
            <person name="Tekaia F."/>
            <person name="Badcock K."/>
            <person name="Basham D."/>
            <person name="Brown D."/>
            <person name="Chillingworth T."/>
            <person name="Connor R."/>
            <person name="Davies R.M."/>
            <person name="Devlin K."/>
            <person name="Feltwell T."/>
            <person name="Gentles S."/>
            <person name="Hamlin N."/>
            <person name="Holroyd S."/>
            <person name="Hornsby T."/>
            <person name="Jagels K."/>
            <person name="Krogh A."/>
            <person name="McLean J."/>
            <person name="Moule S."/>
            <person name="Murphy L.D."/>
            <person name="Oliver S."/>
            <person name="Osborne J."/>
            <person name="Quail M.A."/>
            <person name="Rajandream M.A."/>
            <person name="Rogers J."/>
            <person name="Rutter S."/>
            <person name="Seeger K."/>
            <person name="Skelton S."/>
            <person name="Squares S."/>
            <person name="Squares R."/>
            <person name="Sulston J.E."/>
            <person name="Taylor K."/>
            <person name="Whitehead S."/>
            <person name="Barrell B.G."/>
        </authorList>
    </citation>
    <scope>NUCLEOTIDE SEQUENCE [LARGE SCALE GENOMIC DNA]</scope>
    <source>
        <strain>ATCC 25618 / H37Rv</strain>
    </source>
</reference>
<reference key="2">
    <citation type="journal article" date="2002" name="Infect. Immun.">
        <title>IdeR, an essential gene in Mycobacterium tuberculosis: role of IdeR in iron-dependent gene expression, iron metabolism, and oxidative stress response.</title>
        <authorList>
            <person name="Rodriguez G.M."/>
            <person name="Voskuil M.I."/>
            <person name="Gold B."/>
            <person name="Schoolnik G.K."/>
            <person name="Smith I."/>
        </authorList>
    </citation>
    <scope>INDUCTION</scope>
    <source>
        <strain>ATCC 25618 / H37Rv</strain>
    </source>
</reference>
<reference key="3">
    <citation type="journal article" date="2006" name="J. Bacteriol.">
        <title>Identification of an ABC transporter required for iron acquisition and virulence in Mycobacterium tuberculosis.</title>
        <authorList>
            <person name="Rodriguez G.M."/>
            <person name="Smith I."/>
        </authorList>
    </citation>
    <scope>FUNCTION</scope>
    <scope>SUBUNIT</scope>
    <scope>DISRUPTION PHENOTYPE</scope>
    <source>
        <strain>ATCC 25618 / H37Rv</strain>
    </source>
</reference>
<reference key="4">
    <citation type="journal article" date="2008" name="PLoS ONE">
        <title>Mechanistic insights into a novel exporter-importer system of Mycobacterium tuberculosis unravel its role in trafficking of iron.</title>
        <authorList>
            <person name="Farhana A."/>
            <person name="Kumar S."/>
            <person name="Rathore S.S."/>
            <person name="Ghosh P.C."/>
            <person name="Ehtesham N.Z."/>
            <person name="Tyagi A.K."/>
            <person name="Hasnain S.E."/>
        </authorList>
    </citation>
    <scope>SUBCELLULAR LOCATION</scope>
    <scope>INDUCTION</scope>
    <source>
        <strain>ATCC 25618 / H37Rv</strain>
    </source>
</reference>
<reference key="5">
    <citation type="journal article" date="2010" name="J. Bacteriol.">
        <title>The Mycobacterium tuberculosis high-affinity iron importer, IrtA, contains an FAD-binding domain.</title>
        <authorList>
            <person name="Ryndak M.B."/>
            <person name="Wang S."/>
            <person name="Smith I."/>
            <person name="Rodriguez G.M."/>
        </authorList>
    </citation>
    <scope>FUNCTION</scope>
    <scope>SUBUNIT</scope>
    <source>
        <strain>ATCC 25618 / H37Rv</strain>
    </source>
</reference>
<reference key="6">
    <citation type="journal article" date="2011" name="Mol. Cell. Proteomics">
        <title>Proteogenomic analysis of Mycobacterium tuberculosis by high resolution mass spectrometry.</title>
        <authorList>
            <person name="Kelkar D.S."/>
            <person name="Kumar D."/>
            <person name="Kumar P."/>
            <person name="Balakrishnan L."/>
            <person name="Muthusamy B."/>
            <person name="Yadav A.K."/>
            <person name="Shrivastava P."/>
            <person name="Marimuthu A."/>
            <person name="Anand S."/>
            <person name="Sundaram H."/>
            <person name="Kingsbury R."/>
            <person name="Harsha H.C."/>
            <person name="Nair B."/>
            <person name="Prasad T.S."/>
            <person name="Chauhan D.S."/>
            <person name="Katoch K."/>
            <person name="Katoch V.M."/>
            <person name="Kumar P."/>
            <person name="Chaerkady R."/>
            <person name="Ramachandran S."/>
            <person name="Dash D."/>
            <person name="Pandey A."/>
        </authorList>
    </citation>
    <scope>IDENTIFICATION BY MASS SPECTROMETRY [LARGE SCALE ANALYSIS]</scope>
    <source>
        <strain>ATCC 25618 / H37Rv</strain>
    </source>
</reference>
<sequence>MIRTWIALVPNDHRARLIGFALLAFCSVVARAVGTVLLVPLMAALFGEAPQRAWLWLGWLSAATVAGWVLDAVTARIGIELGFAVLNHTQHDVADRLPVVRLDWFTAENTATARQAIAATGPELVGLVVNLVTPLTSAILLPAVIALALLPISWQLGVAALAGVPLLLGALWASAAFARRADTAADKANTALTERIIEFARTQQALRAARRVEPARSLVGNALASQHTATMRLLGMQIPGQLLFSIASQLALIVLAGTTAALTITGTLTVPEAIALIVVMVRYLEPFTAVSELAPALESTRATLGRIGSVLTAPVMVAGSGTWRDGAVVPRIEFDDVAFGYDGGSGPVLDGVSFCLQPGTTTAIVGPSGCGKSTILALIAGLHQPTRGRVLIDGTDVATLDARAQQAVCSVVFQHPYLFHGTIRDNVFAADPGASDDQFAQAVRLARVDELIARLPDGANTIVGEAGSALSGGERQRVSIARALLKAAPVLLVDEATSALDAENEAAVVDALAADPRSRTRVIVAHRLASIRHADRVLFVDDGRVVEDGSISELLTAGGRFSQFWRQQHEAAEWQILAE</sequence>
<proteinExistence type="evidence at protein level"/>
<accession>P9WQJ7</accession>
<accession>L0T6L2</accession>
<accession>P63393</accession>
<accession>Q11019</accession>
<name>IRTB_MYCTU</name>
<comment type="function">
    <text evidence="1 5 7">Part of the ABC transporter complex IrtAB involved in the import of iron-bound mycobactin (Fe-MBT) and carboxymycobactin (Fe-cMBT) (By similarity) (PubMed:16385031, PubMed:19948799). Transmembrane domains (TMD) form a pore in the membrane and the ATP-binding domain (NBD) is responsible for energy generation (By similarity). Required for replication in human macrophages and in mouse lungs (PubMed:16385031).</text>
</comment>
<comment type="subunit">
    <text evidence="9 10">Forms a heterodimer with IrtA.</text>
</comment>
<comment type="subcellular location">
    <subcellularLocation>
        <location evidence="6">Cell inner membrane</location>
        <topology evidence="3 6">Multi-pass membrane protein</topology>
    </subcellularLocation>
</comment>
<comment type="induction">
    <text evidence="4 6">Repressed by iron and IdeR.</text>
</comment>
<comment type="domain">
    <text>In IrtB the ATP-binding domain (NBD) and the transmembrane domain (TMD) are fused.</text>
</comment>
<comment type="disruption phenotype">
    <text evidence="5">Mutants show normal growth in iron-sufficient conditions, but show a growth defect under iron-deficient conditions.</text>
</comment>
<comment type="similarity">
    <text evidence="8">Belongs to the ABC transporter superfamily. Siderophore-Fe(3+) uptake transporter (SIUT) (TC 3.A.1.21) family.</text>
</comment>
<comment type="caution">
    <text evidence="8">PubMed:18461140 reports that IrtB forms a siderophore importer with Rv2895c, however this activity could be due to functional differences of IrtB in the molecular context of M.smegmatis and M.tuberculosis.</text>
</comment>
<protein>
    <recommendedName>
        <fullName>Mycobactin import ATP-binding/permease protein IrtB</fullName>
        <ecNumber>7.2.2.-</ecNumber>
    </recommendedName>
    <alternativeName>
        <fullName>Iron-regulated transporter B</fullName>
    </alternativeName>
</protein>
<feature type="chain" id="PRO_0000093257" description="Mycobactin import ATP-binding/permease protein IrtB">
    <location>
        <begin position="1"/>
        <end position="579"/>
    </location>
</feature>
<feature type="topological domain" description="Cytoplasmic" evidence="8">
    <location>
        <begin position="1"/>
        <end position="16"/>
    </location>
</feature>
<feature type="transmembrane region" description="Helical" evidence="3">
    <location>
        <begin position="17"/>
        <end position="37"/>
    </location>
</feature>
<feature type="topological domain" description="Periplasmic" evidence="8">
    <location>
        <begin position="38"/>
        <end position="52"/>
    </location>
</feature>
<feature type="transmembrane region" description="Helical" evidence="3">
    <location>
        <begin position="53"/>
        <end position="73"/>
    </location>
</feature>
<feature type="topological domain" description="Cytoplasmic" evidence="8">
    <location>
        <begin position="74"/>
        <end position="115"/>
    </location>
</feature>
<feature type="transmembrane region" description="Helical" evidence="3">
    <location>
        <begin position="116"/>
        <end position="136"/>
    </location>
</feature>
<feature type="topological domain" description="Periplasmic" evidence="8">
    <location>
        <begin position="137"/>
        <end position="158"/>
    </location>
</feature>
<feature type="transmembrane region" description="Helical" evidence="3">
    <location>
        <begin position="159"/>
        <end position="179"/>
    </location>
</feature>
<feature type="topological domain" description="Cytoplasmic" evidence="8">
    <location>
        <begin position="180"/>
        <end position="237"/>
    </location>
</feature>
<feature type="transmembrane region" description="Helical" evidence="3">
    <location>
        <begin position="238"/>
        <end position="258"/>
    </location>
</feature>
<feature type="topological domain" description="Periplasmic" evidence="8">
    <location>
        <begin position="259"/>
        <end position="260"/>
    </location>
</feature>
<feature type="transmembrane region" description="Helical" evidence="3">
    <location>
        <begin position="261"/>
        <end position="281"/>
    </location>
</feature>
<feature type="topological domain" description="Cytoplasmic" evidence="8">
    <location>
        <begin position="282"/>
        <end position="579"/>
    </location>
</feature>
<feature type="domain" description="ABC transmembrane type-1" evidence="3">
    <location>
        <begin position="17"/>
        <end position="299"/>
    </location>
</feature>
<feature type="domain" description="ABC transporter" evidence="2">
    <location>
        <begin position="332"/>
        <end position="567"/>
    </location>
</feature>
<feature type="binding site" evidence="2">
    <location>
        <begin position="366"/>
        <end position="373"/>
    </location>
    <ligand>
        <name>ATP</name>
        <dbReference type="ChEBI" id="CHEBI:30616"/>
    </ligand>
</feature>
<feature type="strand" evidence="13">
    <location>
        <begin position="3"/>
        <end position="5"/>
    </location>
</feature>
<feature type="turn" evidence="13">
    <location>
        <begin position="6"/>
        <end position="8"/>
    </location>
</feature>
<feature type="turn" evidence="12">
    <location>
        <begin position="15"/>
        <end position="17"/>
    </location>
</feature>
<feature type="helix" evidence="12">
    <location>
        <begin position="18"/>
        <end position="24"/>
    </location>
</feature>
<feature type="helix" evidence="12">
    <location>
        <begin position="26"/>
        <end position="36"/>
    </location>
</feature>
<feature type="helix" evidence="12">
    <location>
        <begin position="38"/>
        <end position="45"/>
    </location>
</feature>
<feature type="strand" evidence="11">
    <location>
        <begin position="46"/>
        <end position="48"/>
    </location>
</feature>
<feature type="helix" evidence="12">
    <location>
        <begin position="50"/>
        <end position="53"/>
    </location>
</feature>
<feature type="helix" evidence="12">
    <location>
        <begin position="55"/>
        <end position="96"/>
    </location>
</feature>
<feature type="turn" evidence="12">
    <location>
        <begin position="97"/>
        <end position="99"/>
    </location>
</feature>
<feature type="helix" evidence="12">
    <location>
        <begin position="102"/>
        <end position="104"/>
    </location>
</feature>
<feature type="helix" evidence="12">
    <location>
        <begin position="107"/>
        <end position="118"/>
    </location>
</feature>
<feature type="helix" evidence="12">
    <location>
        <begin position="122"/>
        <end position="125"/>
    </location>
</feature>
<feature type="turn" evidence="12">
    <location>
        <begin position="128"/>
        <end position="131"/>
    </location>
</feature>
<feature type="helix" evidence="12">
    <location>
        <begin position="132"/>
        <end position="149"/>
    </location>
</feature>
<feature type="turn" evidence="12">
    <location>
        <begin position="150"/>
        <end position="152"/>
    </location>
</feature>
<feature type="helix" evidence="12">
    <location>
        <begin position="154"/>
        <end position="161"/>
    </location>
</feature>
<feature type="helix" evidence="12">
    <location>
        <begin position="163"/>
        <end position="192"/>
    </location>
</feature>
<feature type="helix" evidence="12">
    <location>
        <begin position="195"/>
        <end position="201"/>
    </location>
</feature>
<feature type="helix" evidence="12">
    <location>
        <begin position="203"/>
        <end position="207"/>
    </location>
</feature>
<feature type="turn" evidence="12">
    <location>
        <begin position="208"/>
        <end position="210"/>
    </location>
</feature>
<feature type="helix" evidence="12">
    <location>
        <begin position="212"/>
        <end position="225"/>
    </location>
</feature>
<feature type="helix" evidence="12">
    <location>
        <begin position="230"/>
        <end position="264"/>
    </location>
</feature>
<feature type="helix" evidence="12">
    <location>
        <begin position="270"/>
        <end position="283"/>
    </location>
</feature>
<feature type="helix" evidence="12">
    <location>
        <begin position="285"/>
        <end position="292"/>
    </location>
</feature>
<feature type="helix" evidence="12">
    <location>
        <begin position="295"/>
        <end position="311"/>
    </location>
</feature>
<feature type="turn" evidence="12">
    <location>
        <begin position="324"/>
        <end position="327"/>
    </location>
</feature>
<feature type="strand" evidence="12">
    <location>
        <begin position="336"/>
        <end position="339"/>
    </location>
</feature>
<feature type="strand" evidence="12">
    <location>
        <begin position="343"/>
        <end position="346"/>
    </location>
</feature>
<feature type="strand" evidence="12">
    <location>
        <begin position="349"/>
        <end position="352"/>
    </location>
</feature>
<feature type="strand" evidence="12">
    <location>
        <begin position="361"/>
        <end position="365"/>
    </location>
</feature>
<feature type="strand" evidence="11">
    <location>
        <begin position="367"/>
        <end position="369"/>
    </location>
</feature>
<feature type="strand" evidence="13">
    <location>
        <begin position="370"/>
        <end position="372"/>
    </location>
</feature>
<feature type="helix" evidence="12">
    <location>
        <begin position="373"/>
        <end position="380"/>
    </location>
</feature>
<feature type="strand" evidence="12">
    <location>
        <begin position="381"/>
        <end position="383"/>
    </location>
</feature>
<feature type="strand" evidence="13">
    <location>
        <begin position="386"/>
        <end position="392"/>
    </location>
</feature>
<feature type="helix" evidence="12">
    <location>
        <begin position="397"/>
        <end position="399"/>
    </location>
</feature>
<feature type="strand" evidence="12">
    <location>
        <begin position="404"/>
        <end position="408"/>
    </location>
</feature>
<feature type="strand" evidence="12">
    <location>
        <begin position="410"/>
        <end position="412"/>
    </location>
</feature>
<feature type="strand" evidence="12">
    <location>
        <begin position="420"/>
        <end position="422"/>
    </location>
</feature>
<feature type="helix" evidence="12">
    <location>
        <begin position="423"/>
        <end position="427"/>
    </location>
</feature>
<feature type="turn" evidence="12">
    <location>
        <begin position="428"/>
        <end position="430"/>
    </location>
</feature>
<feature type="helix" evidence="12">
    <location>
        <begin position="440"/>
        <end position="443"/>
    </location>
</feature>
<feature type="turn" evidence="12">
    <location>
        <begin position="444"/>
        <end position="447"/>
    </location>
</feature>
<feature type="helix" evidence="12">
    <location>
        <begin position="449"/>
        <end position="452"/>
    </location>
</feature>
<feature type="strand" evidence="12">
    <location>
        <begin position="455"/>
        <end position="457"/>
    </location>
</feature>
<feature type="helix" evidence="12">
    <location>
        <begin position="458"/>
        <end position="460"/>
    </location>
</feature>
<feature type="strand" evidence="12">
    <location>
        <begin position="464"/>
        <end position="466"/>
    </location>
</feature>
<feature type="turn" evidence="12">
    <location>
        <begin position="472"/>
        <end position="476"/>
    </location>
</feature>
<feature type="helix" evidence="12">
    <location>
        <begin position="478"/>
        <end position="485"/>
    </location>
</feature>
<feature type="strand" evidence="12">
    <location>
        <begin position="489"/>
        <end position="494"/>
    </location>
</feature>
<feature type="strand" evidence="13">
    <location>
        <begin position="498"/>
        <end position="500"/>
    </location>
</feature>
<feature type="helix" evidence="12">
    <location>
        <begin position="504"/>
        <end position="513"/>
    </location>
</feature>
<feature type="strand" evidence="12">
    <location>
        <begin position="520"/>
        <end position="524"/>
    </location>
</feature>
<feature type="strand" evidence="13">
    <location>
        <begin position="526"/>
        <end position="528"/>
    </location>
</feature>
<feature type="turn" evidence="12">
    <location>
        <begin position="529"/>
        <end position="531"/>
    </location>
</feature>
<feature type="strand" evidence="12">
    <location>
        <begin position="535"/>
        <end position="541"/>
    </location>
</feature>
<feature type="strand" evidence="12">
    <location>
        <begin position="544"/>
        <end position="549"/>
    </location>
</feature>
<feature type="turn" evidence="12">
    <location>
        <begin position="551"/>
        <end position="554"/>
    </location>
</feature>
<feature type="helix" evidence="12">
    <location>
        <begin position="555"/>
        <end position="557"/>
    </location>
</feature>
<feature type="helix" evidence="12">
    <location>
        <begin position="560"/>
        <end position="570"/>
    </location>
</feature>
<dbReference type="EC" id="7.2.2.-"/>
<dbReference type="EMBL" id="AL123456">
    <property type="protein sequence ID" value="CCP44107.1"/>
    <property type="molecule type" value="Genomic_DNA"/>
</dbReference>
<dbReference type="PIR" id="D70740">
    <property type="entry name" value="D70740"/>
</dbReference>
<dbReference type="RefSeq" id="NP_215865.1">
    <property type="nucleotide sequence ID" value="NC_000962.3"/>
</dbReference>
<dbReference type="RefSeq" id="WP_003900322.1">
    <property type="nucleotide sequence ID" value="NZ_NVQJ01000031.1"/>
</dbReference>
<dbReference type="PDB" id="7WIU">
    <property type="method" value="EM"/>
    <property type="resolution" value="3.48 A"/>
    <property type="chains" value="B=1-579"/>
</dbReference>
<dbReference type="PDB" id="7WIV">
    <property type="method" value="EM"/>
    <property type="resolution" value="2.88 A"/>
    <property type="chains" value="B=1-579"/>
</dbReference>
<dbReference type="PDB" id="7WIW">
    <property type="method" value="EM"/>
    <property type="resolution" value="3.12 A"/>
    <property type="chains" value="B=1-579"/>
</dbReference>
<dbReference type="PDB" id="7WIX">
    <property type="method" value="EM"/>
    <property type="resolution" value="3.53 A"/>
    <property type="chains" value="B=1-579"/>
</dbReference>
<dbReference type="PDBsum" id="7WIU"/>
<dbReference type="PDBsum" id="7WIV"/>
<dbReference type="PDBsum" id="7WIW"/>
<dbReference type="PDBsum" id="7WIX"/>
<dbReference type="EMDB" id="EMD-32536"/>
<dbReference type="EMDB" id="EMD-32537"/>
<dbReference type="EMDB" id="EMD-32538"/>
<dbReference type="EMDB" id="EMD-32539"/>
<dbReference type="SMR" id="P9WQJ7"/>
<dbReference type="FunCoup" id="P9WQJ7">
    <property type="interactions" value="83"/>
</dbReference>
<dbReference type="STRING" id="83332.Rv1349"/>
<dbReference type="PaxDb" id="83332-Rv1349"/>
<dbReference type="DNASU" id="886834"/>
<dbReference type="GeneID" id="45425328"/>
<dbReference type="GeneID" id="886834"/>
<dbReference type="KEGG" id="mtu:Rv1349"/>
<dbReference type="KEGG" id="mtv:RVBD_1349"/>
<dbReference type="TubercuList" id="Rv1349"/>
<dbReference type="eggNOG" id="COG1132">
    <property type="taxonomic scope" value="Bacteria"/>
</dbReference>
<dbReference type="InParanoid" id="P9WQJ7"/>
<dbReference type="OrthoDB" id="9806127at2"/>
<dbReference type="PhylomeDB" id="P9WQJ7"/>
<dbReference type="Reactome" id="R-HSA-1222449">
    <property type="pathway name" value="Mtb iron assimilation by chelation"/>
</dbReference>
<dbReference type="Proteomes" id="UP000001584">
    <property type="component" value="Chromosome"/>
</dbReference>
<dbReference type="GO" id="GO:0005829">
    <property type="term" value="C:cytosol"/>
    <property type="evidence" value="ECO:0007005"/>
    <property type="project" value="MTBBASE"/>
</dbReference>
<dbReference type="GO" id="GO:0005886">
    <property type="term" value="C:plasma membrane"/>
    <property type="evidence" value="ECO:0000314"/>
    <property type="project" value="MTBBASE"/>
</dbReference>
<dbReference type="GO" id="GO:0140359">
    <property type="term" value="F:ABC-type transporter activity"/>
    <property type="evidence" value="ECO:0007669"/>
    <property type="project" value="InterPro"/>
</dbReference>
<dbReference type="GO" id="GO:0005524">
    <property type="term" value="F:ATP binding"/>
    <property type="evidence" value="ECO:0007669"/>
    <property type="project" value="UniProtKB-KW"/>
</dbReference>
<dbReference type="GO" id="GO:0016887">
    <property type="term" value="F:ATP hydrolysis activity"/>
    <property type="evidence" value="ECO:0007669"/>
    <property type="project" value="InterPro"/>
</dbReference>
<dbReference type="GO" id="GO:0042626">
    <property type="term" value="F:ATPase-coupled transmembrane transporter activity"/>
    <property type="evidence" value="ECO:0000318"/>
    <property type="project" value="GO_Central"/>
</dbReference>
<dbReference type="GO" id="GO:0015343">
    <property type="term" value="F:siderophore-iron transmembrane transporter activity"/>
    <property type="evidence" value="ECO:0000314"/>
    <property type="project" value="MTBBASE"/>
</dbReference>
<dbReference type="GO" id="GO:0010106">
    <property type="term" value="P:cellular response to iron ion starvation"/>
    <property type="evidence" value="ECO:0000270"/>
    <property type="project" value="MTBBASE"/>
</dbReference>
<dbReference type="GO" id="GO:0006879">
    <property type="term" value="P:intracellular iron ion homeostasis"/>
    <property type="evidence" value="ECO:0000315"/>
    <property type="project" value="GO_Central"/>
</dbReference>
<dbReference type="GO" id="GO:0044847">
    <property type="term" value="P:iron acquisition from host"/>
    <property type="evidence" value="ECO:0000315"/>
    <property type="project" value="GO_Central"/>
</dbReference>
<dbReference type="GO" id="GO:0033214">
    <property type="term" value="P:siderophore-dependent iron import into cell"/>
    <property type="evidence" value="ECO:0000314"/>
    <property type="project" value="GO_Central"/>
</dbReference>
<dbReference type="FunFam" id="3.40.50.300:FF:000221">
    <property type="entry name" value="Multidrug ABC transporter ATP-binding protein"/>
    <property type="match status" value="1"/>
</dbReference>
<dbReference type="Gene3D" id="1.20.1560.10">
    <property type="entry name" value="ABC transporter type 1, transmembrane domain"/>
    <property type="match status" value="1"/>
</dbReference>
<dbReference type="Gene3D" id="3.40.50.300">
    <property type="entry name" value="P-loop containing nucleotide triphosphate hydrolases"/>
    <property type="match status" value="1"/>
</dbReference>
<dbReference type="InterPro" id="IPR003593">
    <property type="entry name" value="AAA+_ATPase"/>
</dbReference>
<dbReference type="InterPro" id="IPR011527">
    <property type="entry name" value="ABC1_TM_dom"/>
</dbReference>
<dbReference type="InterPro" id="IPR036640">
    <property type="entry name" value="ABC1_TM_sf"/>
</dbReference>
<dbReference type="InterPro" id="IPR003439">
    <property type="entry name" value="ABC_transporter-like_ATP-bd"/>
</dbReference>
<dbReference type="InterPro" id="IPR017871">
    <property type="entry name" value="ABC_transporter-like_CS"/>
</dbReference>
<dbReference type="InterPro" id="IPR027417">
    <property type="entry name" value="P-loop_NTPase"/>
</dbReference>
<dbReference type="InterPro" id="IPR039421">
    <property type="entry name" value="Type_1_exporter"/>
</dbReference>
<dbReference type="PANTHER" id="PTHR24221">
    <property type="entry name" value="ATP-BINDING CASSETTE SUB-FAMILY B"/>
    <property type="match status" value="1"/>
</dbReference>
<dbReference type="PANTHER" id="PTHR24221:SF654">
    <property type="entry name" value="ATP-BINDING CASSETTE SUB-FAMILY B MEMBER 6"/>
    <property type="match status" value="1"/>
</dbReference>
<dbReference type="Pfam" id="PF00005">
    <property type="entry name" value="ABC_tran"/>
    <property type="match status" value="1"/>
</dbReference>
<dbReference type="SMART" id="SM00382">
    <property type="entry name" value="AAA"/>
    <property type="match status" value="1"/>
</dbReference>
<dbReference type="SUPFAM" id="SSF90123">
    <property type="entry name" value="ABC transporter transmembrane region"/>
    <property type="match status" value="1"/>
</dbReference>
<dbReference type="SUPFAM" id="SSF52540">
    <property type="entry name" value="P-loop containing nucleoside triphosphate hydrolases"/>
    <property type="match status" value="1"/>
</dbReference>
<dbReference type="PROSITE" id="PS50929">
    <property type="entry name" value="ABC_TM1F"/>
    <property type="match status" value="1"/>
</dbReference>
<dbReference type="PROSITE" id="PS00211">
    <property type="entry name" value="ABC_TRANSPORTER_1"/>
    <property type="match status" value="1"/>
</dbReference>
<dbReference type="PROSITE" id="PS50893">
    <property type="entry name" value="ABC_TRANSPORTER_2"/>
    <property type="match status" value="1"/>
</dbReference>
<evidence type="ECO:0000250" key="1">
    <source>
        <dbReference type="UniProtKB" id="G7CBF6"/>
    </source>
</evidence>
<evidence type="ECO:0000255" key="2">
    <source>
        <dbReference type="PROSITE-ProRule" id="PRU00434"/>
    </source>
</evidence>
<evidence type="ECO:0000255" key="3">
    <source>
        <dbReference type="PROSITE-ProRule" id="PRU00441"/>
    </source>
</evidence>
<evidence type="ECO:0000269" key="4">
    <source>
    </source>
</evidence>
<evidence type="ECO:0000269" key="5">
    <source>
    </source>
</evidence>
<evidence type="ECO:0000269" key="6">
    <source>
    </source>
</evidence>
<evidence type="ECO:0000269" key="7">
    <source>
    </source>
</evidence>
<evidence type="ECO:0000305" key="8"/>
<evidence type="ECO:0000305" key="9">
    <source>
    </source>
</evidence>
<evidence type="ECO:0000305" key="10">
    <source>
    </source>
</evidence>
<evidence type="ECO:0007829" key="11">
    <source>
        <dbReference type="PDB" id="7WIU"/>
    </source>
</evidence>
<evidence type="ECO:0007829" key="12">
    <source>
        <dbReference type="PDB" id="7WIV"/>
    </source>
</evidence>
<evidence type="ECO:0007829" key="13">
    <source>
        <dbReference type="PDB" id="7WIW"/>
    </source>
</evidence>
<keyword id="KW-0002">3D-structure</keyword>
<keyword id="KW-0067">ATP-binding</keyword>
<keyword id="KW-0997">Cell inner membrane</keyword>
<keyword id="KW-1003">Cell membrane</keyword>
<keyword id="KW-0472">Membrane</keyword>
<keyword id="KW-0547">Nucleotide-binding</keyword>
<keyword id="KW-1185">Reference proteome</keyword>
<keyword id="KW-1278">Translocase</keyword>
<keyword id="KW-0812">Transmembrane</keyword>
<keyword id="KW-1133">Transmembrane helix</keyword>
<keyword id="KW-0813">Transport</keyword>